<name>URK_STRPJ</name>
<sequence>MQNRPIIIGVTGGSGGGKTSVSRAILSHFPDEKISMIEHDSYYKDQSHLTFEERVKTNYDHPFAFDTDLMIEQIKELLAGRPVDIPTYDYTEHTRSSKTYRQEPQDVFIVEGILVLEDKRLRDLMDIKIFVDTDDDVRIIRRIKRDMEERGRSLDSVINQYLGVVKPMYHQFIESTKRYADIVIPEGVSNTVAIDLLTTKIAKILEEARNSK</sequence>
<accession>B8ZQ77</accession>
<gene>
    <name evidence="1" type="primary">udk</name>
    <name type="ordered locus">SPN23F11080</name>
</gene>
<keyword id="KW-0067">ATP-binding</keyword>
<keyword id="KW-0963">Cytoplasm</keyword>
<keyword id="KW-0418">Kinase</keyword>
<keyword id="KW-0547">Nucleotide-binding</keyword>
<keyword id="KW-0808">Transferase</keyword>
<reference key="1">
    <citation type="journal article" date="2009" name="J. Bacteriol.">
        <title>Role of conjugative elements in the evolution of the multidrug-resistant pandemic clone Streptococcus pneumoniae Spain23F ST81.</title>
        <authorList>
            <person name="Croucher N.J."/>
            <person name="Walker D."/>
            <person name="Romero P."/>
            <person name="Lennard N."/>
            <person name="Paterson G.K."/>
            <person name="Bason N.C."/>
            <person name="Mitchell A.M."/>
            <person name="Quail M.A."/>
            <person name="Andrew P.W."/>
            <person name="Parkhill J."/>
            <person name="Bentley S.D."/>
            <person name="Mitchell T.J."/>
        </authorList>
    </citation>
    <scope>NUCLEOTIDE SEQUENCE [LARGE SCALE GENOMIC DNA]</scope>
    <source>
        <strain>ATCC 700669 / Spain 23F-1</strain>
    </source>
</reference>
<feature type="chain" id="PRO_1000200523" description="Uridine kinase">
    <location>
        <begin position="1"/>
        <end position="212"/>
    </location>
</feature>
<feature type="binding site" evidence="1">
    <location>
        <begin position="12"/>
        <end position="19"/>
    </location>
    <ligand>
        <name>ATP</name>
        <dbReference type="ChEBI" id="CHEBI:30616"/>
    </ligand>
</feature>
<dbReference type="EC" id="2.7.1.48" evidence="1"/>
<dbReference type="EMBL" id="FM211187">
    <property type="protein sequence ID" value="CAR68918.1"/>
    <property type="molecule type" value="Genomic_DNA"/>
</dbReference>
<dbReference type="RefSeq" id="WP_001181378.1">
    <property type="nucleotide sequence ID" value="NC_011900.1"/>
</dbReference>
<dbReference type="SMR" id="B8ZQ77"/>
<dbReference type="GeneID" id="45653496"/>
<dbReference type="KEGG" id="sne:SPN23F11080"/>
<dbReference type="HOGENOM" id="CLU_021278_1_2_9"/>
<dbReference type="UniPathway" id="UPA00574">
    <property type="reaction ID" value="UER00637"/>
</dbReference>
<dbReference type="UniPathway" id="UPA00579">
    <property type="reaction ID" value="UER00640"/>
</dbReference>
<dbReference type="GO" id="GO:0005737">
    <property type="term" value="C:cytoplasm"/>
    <property type="evidence" value="ECO:0007669"/>
    <property type="project" value="UniProtKB-SubCell"/>
</dbReference>
<dbReference type="GO" id="GO:0005524">
    <property type="term" value="F:ATP binding"/>
    <property type="evidence" value="ECO:0007669"/>
    <property type="project" value="UniProtKB-UniRule"/>
</dbReference>
<dbReference type="GO" id="GO:0043771">
    <property type="term" value="F:cytidine kinase activity"/>
    <property type="evidence" value="ECO:0007669"/>
    <property type="project" value="RHEA"/>
</dbReference>
<dbReference type="GO" id="GO:0004849">
    <property type="term" value="F:uridine kinase activity"/>
    <property type="evidence" value="ECO:0007669"/>
    <property type="project" value="UniProtKB-UniRule"/>
</dbReference>
<dbReference type="GO" id="GO:0044211">
    <property type="term" value="P:CTP salvage"/>
    <property type="evidence" value="ECO:0007669"/>
    <property type="project" value="UniProtKB-UniRule"/>
</dbReference>
<dbReference type="GO" id="GO:0044206">
    <property type="term" value="P:UMP salvage"/>
    <property type="evidence" value="ECO:0007669"/>
    <property type="project" value="UniProtKB-UniRule"/>
</dbReference>
<dbReference type="CDD" id="cd02023">
    <property type="entry name" value="UMPK"/>
    <property type="match status" value="1"/>
</dbReference>
<dbReference type="Gene3D" id="3.40.50.300">
    <property type="entry name" value="P-loop containing nucleotide triphosphate hydrolases"/>
    <property type="match status" value="1"/>
</dbReference>
<dbReference type="HAMAP" id="MF_00551">
    <property type="entry name" value="Uridine_kinase"/>
    <property type="match status" value="1"/>
</dbReference>
<dbReference type="InterPro" id="IPR027417">
    <property type="entry name" value="P-loop_NTPase"/>
</dbReference>
<dbReference type="InterPro" id="IPR006083">
    <property type="entry name" value="PRK/URK"/>
</dbReference>
<dbReference type="InterPro" id="IPR026008">
    <property type="entry name" value="Uridine_kinase"/>
</dbReference>
<dbReference type="InterPro" id="IPR000764">
    <property type="entry name" value="Uridine_kinase-like"/>
</dbReference>
<dbReference type="NCBIfam" id="NF004018">
    <property type="entry name" value="PRK05480.1"/>
    <property type="match status" value="1"/>
</dbReference>
<dbReference type="NCBIfam" id="TIGR00235">
    <property type="entry name" value="udk"/>
    <property type="match status" value="1"/>
</dbReference>
<dbReference type="PANTHER" id="PTHR10285">
    <property type="entry name" value="URIDINE KINASE"/>
    <property type="match status" value="1"/>
</dbReference>
<dbReference type="Pfam" id="PF00485">
    <property type="entry name" value="PRK"/>
    <property type="match status" value="1"/>
</dbReference>
<dbReference type="PRINTS" id="PR00988">
    <property type="entry name" value="URIDINKINASE"/>
</dbReference>
<dbReference type="SUPFAM" id="SSF52540">
    <property type="entry name" value="P-loop containing nucleoside triphosphate hydrolases"/>
    <property type="match status" value="1"/>
</dbReference>
<proteinExistence type="inferred from homology"/>
<protein>
    <recommendedName>
        <fullName evidence="1">Uridine kinase</fullName>
        <ecNumber evidence="1">2.7.1.48</ecNumber>
    </recommendedName>
    <alternativeName>
        <fullName evidence="1">Cytidine monophosphokinase</fullName>
    </alternativeName>
    <alternativeName>
        <fullName evidence="1">Uridine monophosphokinase</fullName>
    </alternativeName>
</protein>
<comment type="catalytic activity">
    <reaction evidence="1">
        <text>uridine + ATP = UMP + ADP + H(+)</text>
        <dbReference type="Rhea" id="RHEA:16825"/>
        <dbReference type="ChEBI" id="CHEBI:15378"/>
        <dbReference type="ChEBI" id="CHEBI:16704"/>
        <dbReference type="ChEBI" id="CHEBI:30616"/>
        <dbReference type="ChEBI" id="CHEBI:57865"/>
        <dbReference type="ChEBI" id="CHEBI:456216"/>
        <dbReference type="EC" id="2.7.1.48"/>
    </reaction>
</comment>
<comment type="catalytic activity">
    <reaction evidence="1">
        <text>cytidine + ATP = CMP + ADP + H(+)</text>
        <dbReference type="Rhea" id="RHEA:24674"/>
        <dbReference type="ChEBI" id="CHEBI:15378"/>
        <dbReference type="ChEBI" id="CHEBI:17562"/>
        <dbReference type="ChEBI" id="CHEBI:30616"/>
        <dbReference type="ChEBI" id="CHEBI:60377"/>
        <dbReference type="ChEBI" id="CHEBI:456216"/>
        <dbReference type="EC" id="2.7.1.48"/>
    </reaction>
</comment>
<comment type="pathway">
    <text evidence="1">Pyrimidine metabolism; CTP biosynthesis via salvage pathway; CTP from cytidine: step 1/3.</text>
</comment>
<comment type="pathway">
    <text evidence="1">Pyrimidine metabolism; UMP biosynthesis via salvage pathway; UMP from uridine: step 1/1.</text>
</comment>
<comment type="subcellular location">
    <subcellularLocation>
        <location evidence="1">Cytoplasm</location>
    </subcellularLocation>
</comment>
<comment type="similarity">
    <text evidence="1">Belongs to the uridine kinase family.</text>
</comment>
<evidence type="ECO:0000255" key="1">
    <source>
        <dbReference type="HAMAP-Rule" id="MF_00551"/>
    </source>
</evidence>
<organism>
    <name type="scientific">Streptococcus pneumoniae (strain ATCC 700669 / Spain 23F-1)</name>
    <dbReference type="NCBI Taxonomy" id="561276"/>
    <lineage>
        <taxon>Bacteria</taxon>
        <taxon>Bacillati</taxon>
        <taxon>Bacillota</taxon>
        <taxon>Bacilli</taxon>
        <taxon>Lactobacillales</taxon>
        <taxon>Streptococcaceae</taxon>
        <taxon>Streptococcus</taxon>
    </lineage>
</organism>